<protein>
    <recommendedName>
        <fullName evidence="1">Large ribosomal subunit protein bL20</fullName>
    </recommendedName>
    <alternativeName>
        <fullName evidence="2">50S ribosomal protein L20</fullName>
    </alternativeName>
</protein>
<evidence type="ECO:0000255" key="1">
    <source>
        <dbReference type="HAMAP-Rule" id="MF_00382"/>
    </source>
</evidence>
<evidence type="ECO:0000305" key="2"/>
<feature type="chain" id="PRO_1000122258" description="Large ribosomal subunit protein bL20">
    <location>
        <begin position="1"/>
        <end position="119"/>
    </location>
</feature>
<sequence length="119" mass="13467">MARVKRGVVAHRRHKKILARTKGYYGARSRVYRVAFQAVIKAGQYAYRDRRQKKRQFRALWIARINAGARQNGLSYSRMIDGLKKAQVIIDRRVLADIAMHDAVAFAALAEKAKGALAA</sequence>
<proteinExistence type="inferred from homology"/>
<gene>
    <name evidence="1" type="primary">rplT</name>
    <name type="ordered locus">ABSDF2914</name>
</gene>
<accession>B0VV91</accession>
<comment type="function">
    <text evidence="1">Binds directly to 23S ribosomal RNA and is necessary for the in vitro assembly process of the 50S ribosomal subunit. It is not involved in the protein synthesizing functions of that subunit.</text>
</comment>
<comment type="similarity">
    <text evidence="1">Belongs to the bacterial ribosomal protein bL20 family.</text>
</comment>
<name>RL20_ACIBS</name>
<keyword id="KW-0687">Ribonucleoprotein</keyword>
<keyword id="KW-0689">Ribosomal protein</keyword>
<keyword id="KW-0694">RNA-binding</keyword>
<keyword id="KW-0699">rRNA-binding</keyword>
<dbReference type="EMBL" id="CU468230">
    <property type="protein sequence ID" value="CAP02204.1"/>
    <property type="molecule type" value="Genomic_DNA"/>
</dbReference>
<dbReference type="SMR" id="B0VV91"/>
<dbReference type="KEGG" id="abm:ABSDF2914"/>
<dbReference type="HOGENOM" id="CLU_123265_0_1_6"/>
<dbReference type="Proteomes" id="UP000001741">
    <property type="component" value="Chromosome"/>
</dbReference>
<dbReference type="GO" id="GO:1990904">
    <property type="term" value="C:ribonucleoprotein complex"/>
    <property type="evidence" value="ECO:0007669"/>
    <property type="project" value="UniProtKB-KW"/>
</dbReference>
<dbReference type="GO" id="GO:0005840">
    <property type="term" value="C:ribosome"/>
    <property type="evidence" value="ECO:0007669"/>
    <property type="project" value="UniProtKB-KW"/>
</dbReference>
<dbReference type="GO" id="GO:0019843">
    <property type="term" value="F:rRNA binding"/>
    <property type="evidence" value="ECO:0007669"/>
    <property type="project" value="UniProtKB-UniRule"/>
</dbReference>
<dbReference type="GO" id="GO:0003735">
    <property type="term" value="F:structural constituent of ribosome"/>
    <property type="evidence" value="ECO:0007669"/>
    <property type="project" value="InterPro"/>
</dbReference>
<dbReference type="GO" id="GO:0000027">
    <property type="term" value="P:ribosomal large subunit assembly"/>
    <property type="evidence" value="ECO:0007669"/>
    <property type="project" value="UniProtKB-UniRule"/>
</dbReference>
<dbReference type="GO" id="GO:0006412">
    <property type="term" value="P:translation"/>
    <property type="evidence" value="ECO:0007669"/>
    <property type="project" value="InterPro"/>
</dbReference>
<dbReference type="CDD" id="cd07026">
    <property type="entry name" value="Ribosomal_L20"/>
    <property type="match status" value="1"/>
</dbReference>
<dbReference type="FunFam" id="1.10.1900.20:FF:000001">
    <property type="entry name" value="50S ribosomal protein L20"/>
    <property type="match status" value="1"/>
</dbReference>
<dbReference type="Gene3D" id="6.10.160.10">
    <property type="match status" value="1"/>
</dbReference>
<dbReference type="Gene3D" id="1.10.1900.20">
    <property type="entry name" value="Ribosomal protein L20"/>
    <property type="match status" value="1"/>
</dbReference>
<dbReference type="HAMAP" id="MF_00382">
    <property type="entry name" value="Ribosomal_bL20"/>
    <property type="match status" value="1"/>
</dbReference>
<dbReference type="InterPro" id="IPR005813">
    <property type="entry name" value="Ribosomal_bL20"/>
</dbReference>
<dbReference type="InterPro" id="IPR049946">
    <property type="entry name" value="RIBOSOMAL_L20_CS"/>
</dbReference>
<dbReference type="InterPro" id="IPR035566">
    <property type="entry name" value="Ribosomal_protein_bL20_C"/>
</dbReference>
<dbReference type="NCBIfam" id="TIGR01032">
    <property type="entry name" value="rplT_bact"/>
    <property type="match status" value="1"/>
</dbReference>
<dbReference type="PANTHER" id="PTHR10986">
    <property type="entry name" value="39S RIBOSOMAL PROTEIN L20"/>
    <property type="match status" value="1"/>
</dbReference>
<dbReference type="Pfam" id="PF00453">
    <property type="entry name" value="Ribosomal_L20"/>
    <property type="match status" value="1"/>
</dbReference>
<dbReference type="PRINTS" id="PR00062">
    <property type="entry name" value="RIBOSOMALL20"/>
</dbReference>
<dbReference type="SUPFAM" id="SSF74731">
    <property type="entry name" value="Ribosomal protein L20"/>
    <property type="match status" value="1"/>
</dbReference>
<dbReference type="PROSITE" id="PS00937">
    <property type="entry name" value="RIBOSOMAL_L20"/>
    <property type="match status" value="1"/>
</dbReference>
<reference key="1">
    <citation type="journal article" date="2008" name="PLoS ONE">
        <title>Comparative analysis of Acinetobacters: three genomes for three lifestyles.</title>
        <authorList>
            <person name="Vallenet D."/>
            <person name="Nordmann P."/>
            <person name="Barbe V."/>
            <person name="Poirel L."/>
            <person name="Mangenot S."/>
            <person name="Bataille E."/>
            <person name="Dossat C."/>
            <person name="Gas S."/>
            <person name="Kreimeyer A."/>
            <person name="Lenoble P."/>
            <person name="Oztas S."/>
            <person name="Poulain J."/>
            <person name="Segurens B."/>
            <person name="Robert C."/>
            <person name="Abergel C."/>
            <person name="Claverie J.-M."/>
            <person name="Raoult D."/>
            <person name="Medigue C."/>
            <person name="Weissenbach J."/>
            <person name="Cruveiller S."/>
        </authorList>
    </citation>
    <scope>NUCLEOTIDE SEQUENCE [LARGE SCALE GENOMIC DNA]</scope>
    <source>
        <strain>SDF</strain>
    </source>
</reference>
<organism>
    <name type="scientific">Acinetobacter baumannii (strain SDF)</name>
    <dbReference type="NCBI Taxonomy" id="509170"/>
    <lineage>
        <taxon>Bacteria</taxon>
        <taxon>Pseudomonadati</taxon>
        <taxon>Pseudomonadota</taxon>
        <taxon>Gammaproteobacteria</taxon>
        <taxon>Moraxellales</taxon>
        <taxon>Moraxellaceae</taxon>
        <taxon>Acinetobacter</taxon>
        <taxon>Acinetobacter calcoaceticus/baumannii complex</taxon>
    </lineage>
</organism>